<keyword id="KW-0997">Cell inner membrane</keyword>
<keyword id="KW-1003">Cell membrane</keyword>
<keyword id="KW-0963">Cytoplasm</keyword>
<keyword id="KW-0342">GTP-binding</keyword>
<keyword id="KW-0472">Membrane</keyword>
<keyword id="KW-0547">Nucleotide-binding</keyword>
<keyword id="KW-0690">Ribosome biogenesis</keyword>
<keyword id="KW-0694">RNA-binding</keyword>
<keyword id="KW-0699">rRNA-binding</keyword>
<organism>
    <name type="scientific">Helicobacter acinonychis (strain Sheeba)</name>
    <dbReference type="NCBI Taxonomy" id="382638"/>
    <lineage>
        <taxon>Bacteria</taxon>
        <taxon>Pseudomonadati</taxon>
        <taxon>Campylobacterota</taxon>
        <taxon>Epsilonproteobacteria</taxon>
        <taxon>Campylobacterales</taxon>
        <taxon>Helicobacteraceae</taxon>
        <taxon>Helicobacter</taxon>
    </lineage>
</organism>
<comment type="function">
    <text evidence="1">An essential GTPase that binds both GDP and GTP, with rapid nucleotide exchange. Plays a role in 16S rRNA processing and 30S ribosomal subunit biogenesis and possibly also in cell cycle regulation and energy metabolism.</text>
</comment>
<comment type="subunit">
    <text evidence="1">Monomer.</text>
</comment>
<comment type="subcellular location">
    <subcellularLocation>
        <location>Cytoplasm</location>
    </subcellularLocation>
    <subcellularLocation>
        <location evidence="1">Cell inner membrane</location>
        <topology evidence="1">Peripheral membrane protein</topology>
    </subcellularLocation>
</comment>
<comment type="similarity">
    <text evidence="1 2">Belongs to the TRAFAC class TrmE-Era-EngA-EngB-Septin-like GTPase superfamily. Era GTPase family.</text>
</comment>
<proteinExistence type="inferred from homology"/>
<evidence type="ECO:0000255" key="1">
    <source>
        <dbReference type="HAMAP-Rule" id="MF_00367"/>
    </source>
</evidence>
<evidence type="ECO:0000255" key="2">
    <source>
        <dbReference type="PROSITE-ProRule" id="PRU01050"/>
    </source>
</evidence>
<name>ERA_HELAH</name>
<dbReference type="EMBL" id="AM260522">
    <property type="protein sequence ID" value="CAJ99667.1"/>
    <property type="molecule type" value="Genomic_DNA"/>
</dbReference>
<dbReference type="RefSeq" id="WP_011577779.1">
    <property type="nucleotide sequence ID" value="NC_008229.1"/>
</dbReference>
<dbReference type="SMR" id="Q17XF9"/>
<dbReference type="STRING" id="382638.Hac_0885"/>
<dbReference type="GeneID" id="31758293"/>
<dbReference type="KEGG" id="hac:Hac_0885"/>
<dbReference type="eggNOG" id="COG1159">
    <property type="taxonomic scope" value="Bacteria"/>
</dbReference>
<dbReference type="HOGENOM" id="CLU_038009_1_0_7"/>
<dbReference type="BioCyc" id="HACI382638:HAC_RS03810-MONOMER"/>
<dbReference type="Proteomes" id="UP000000775">
    <property type="component" value="Chromosome"/>
</dbReference>
<dbReference type="GO" id="GO:0005829">
    <property type="term" value="C:cytosol"/>
    <property type="evidence" value="ECO:0007669"/>
    <property type="project" value="TreeGrafter"/>
</dbReference>
<dbReference type="GO" id="GO:0005886">
    <property type="term" value="C:plasma membrane"/>
    <property type="evidence" value="ECO:0007669"/>
    <property type="project" value="UniProtKB-SubCell"/>
</dbReference>
<dbReference type="GO" id="GO:0005525">
    <property type="term" value="F:GTP binding"/>
    <property type="evidence" value="ECO:0007669"/>
    <property type="project" value="UniProtKB-UniRule"/>
</dbReference>
<dbReference type="GO" id="GO:0003924">
    <property type="term" value="F:GTPase activity"/>
    <property type="evidence" value="ECO:0007669"/>
    <property type="project" value="UniProtKB-UniRule"/>
</dbReference>
<dbReference type="GO" id="GO:0043024">
    <property type="term" value="F:ribosomal small subunit binding"/>
    <property type="evidence" value="ECO:0007669"/>
    <property type="project" value="TreeGrafter"/>
</dbReference>
<dbReference type="GO" id="GO:0070181">
    <property type="term" value="F:small ribosomal subunit rRNA binding"/>
    <property type="evidence" value="ECO:0007669"/>
    <property type="project" value="UniProtKB-UniRule"/>
</dbReference>
<dbReference type="GO" id="GO:0000028">
    <property type="term" value="P:ribosomal small subunit assembly"/>
    <property type="evidence" value="ECO:0007669"/>
    <property type="project" value="TreeGrafter"/>
</dbReference>
<dbReference type="CDD" id="cd04163">
    <property type="entry name" value="Era"/>
    <property type="match status" value="1"/>
</dbReference>
<dbReference type="CDD" id="cd22534">
    <property type="entry name" value="KH-II_Era"/>
    <property type="match status" value="1"/>
</dbReference>
<dbReference type="Gene3D" id="3.30.300.20">
    <property type="match status" value="1"/>
</dbReference>
<dbReference type="Gene3D" id="3.40.50.300">
    <property type="entry name" value="P-loop containing nucleotide triphosphate hydrolases"/>
    <property type="match status" value="1"/>
</dbReference>
<dbReference type="HAMAP" id="MF_00367">
    <property type="entry name" value="GTPase_Era"/>
    <property type="match status" value="1"/>
</dbReference>
<dbReference type="InterPro" id="IPR030388">
    <property type="entry name" value="G_ERA_dom"/>
</dbReference>
<dbReference type="InterPro" id="IPR006073">
    <property type="entry name" value="GTP-bd"/>
</dbReference>
<dbReference type="InterPro" id="IPR005662">
    <property type="entry name" value="GTPase_Era-like"/>
</dbReference>
<dbReference type="InterPro" id="IPR015946">
    <property type="entry name" value="KH_dom-like_a/b"/>
</dbReference>
<dbReference type="InterPro" id="IPR004044">
    <property type="entry name" value="KH_dom_type_2"/>
</dbReference>
<dbReference type="InterPro" id="IPR009019">
    <property type="entry name" value="KH_sf_prok-type"/>
</dbReference>
<dbReference type="InterPro" id="IPR027417">
    <property type="entry name" value="P-loop_NTPase"/>
</dbReference>
<dbReference type="InterPro" id="IPR005225">
    <property type="entry name" value="Small_GTP-bd"/>
</dbReference>
<dbReference type="NCBIfam" id="TIGR00436">
    <property type="entry name" value="era"/>
    <property type="match status" value="1"/>
</dbReference>
<dbReference type="NCBIfam" id="NF000908">
    <property type="entry name" value="PRK00089.1"/>
    <property type="match status" value="1"/>
</dbReference>
<dbReference type="NCBIfam" id="TIGR00231">
    <property type="entry name" value="small_GTP"/>
    <property type="match status" value="1"/>
</dbReference>
<dbReference type="PANTHER" id="PTHR42698">
    <property type="entry name" value="GTPASE ERA"/>
    <property type="match status" value="1"/>
</dbReference>
<dbReference type="PANTHER" id="PTHR42698:SF1">
    <property type="entry name" value="GTPASE ERA, MITOCHONDRIAL"/>
    <property type="match status" value="1"/>
</dbReference>
<dbReference type="Pfam" id="PF07650">
    <property type="entry name" value="KH_2"/>
    <property type="match status" value="1"/>
</dbReference>
<dbReference type="Pfam" id="PF01926">
    <property type="entry name" value="MMR_HSR1"/>
    <property type="match status" value="1"/>
</dbReference>
<dbReference type="SUPFAM" id="SSF52540">
    <property type="entry name" value="P-loop containing nucleoside triphosphate hydrolases"/>
    <property type="match status" value="1"/>
</dbReference>
<dbReference type="SUPFAM" id="SSF54814">
    <property type="entry name" value="Prokaryotic type KH domain (KH-domain type II)"/>
    <property type="match status" value="1"/>
</dbReference>
<dbReference type="PROSITE" id="PS51713">
    <property type="entry name" value="G_ERA"/>
    <property type="match status" value="1"/>
</dbReference>
<dbReference type="PROSITE" id="PS50823">
    <property type="entry name" value="KH_TYPE_2"/>
    <property type="match status" value="1"/>
</dbReference>
<feature type="chain" id="PRO_1000079700" description="GTPase Era">
    <location>
        <begin position="1"/>
        <end position="301"/>
    </location>
</feature>
<feature type="domain" description="Era-type G" evidence="2">
    <location>
        <begin position="4"/>
        <end position="173"/>
    </location>
</feature>
<feature type="domain" description="KH type-2" evidence="1">
    <location>
        <begin position="204"/>
        <end position="280"/>
    </location>
</feature>
<feature type="region of interest" description="G1" evidence="2">
    <location>
        <begin position="12"/>
        <end position="19"/>
    </location>
</feature>
<feature type="region of interest" description="G2" evidence="2">
    <location>
        <begin position="38"/>
        <end position="42"/>
    </location>
</feature>
<feature type="region of interest" description="G3" evidence="2">
    <location>
        <begin position="64"/>
        <end position="67"/>
    </location>
</feature>
<feature type="region of interest" description="G4" evidence="2">
    <location>
        <begin position="122"/>
        <end position="125"/>
    </location>
</feature>
<feature type="region of interest" description="G5" evidence="2">
    <location>
        <begin position="152"/>
        <end position="154"/>
    </location>
</feature>
<feature type="binding site" evidence="1">
    <location>
        <begin position="12"/>
        <end position="19"/>
    </location>
    <ligand>
        <name>GTP</name>
        <dbReference type="ChEBI" id="CHEBI:37565"/>
    </ligand>
</feature>
<feature type="binding site" evidence="1">
    <location>
        <begin position="64"/>
        <end position="68"/>
    </location>
    <ligand>
        <name>GTP</name>
        <dbReference type="ChEBI" id="CHEBI:37565"/>
    </ligand>
</feature>
<feature type="binding site" evidence="1">
    <location>
        <begin position="122"/>
        <end position="125"/>
    </location>
    <ligand>
        <name>GTP</name>
        <dbReference type="ChEBI" id="CHEBI:37565"/>
    </ligand>
</feature>
<reference key="1">
    <citation type="journal article" date="2006" name="PLoS Genet.">
        <title>Who ate whom? Adaptive Helicobacter genomic changes that accompanied a host jump from early humans to large felines.</title>
        <authorList>
            <person name="Eppinger M."/>
            <person name="Baar C."/>
            <person name="Linz B."/>
            <person name="Raddatz G."/>
            <person name="Lanz C."/>
            <person name="Keller H."/>
            <person name="Morelli G."/>
            <person name="Gressmann H."/>
            <person name="Achtman M."/>
            <person name="Schuster S.C."/>
        </authorList>
    </citation>
    <scope>NUCLEOTIDE SEQUENCE [LARGE SCALE GENOMIC DNA]</scope>
    <source>
        <strain>Sheeba</strain>
    </source>
</reference>
<accession>Q17XF9</accession>
<sequence>MKTKAGFVALIGKPNAGKSTLLNTLLNAHLALVSHKANATRKLMKCIVPFKDKEGYESQIIFLDTPGLHHQEKLLNQCMLSQALKAMGDAELCVFLASVHDDLKGYEEFLNLCQKPHILALSKIDTATHKQVLQKLQEYQQYASQFLSLIPLSAKKSQNLNALLECISEHLSPSAWLFEKDLMSDEKMRDIYKEIIRESLFCFLSDEIPYESDVIIDKFIEEECIDKVYAHIIVEKESQKKIVIGKNGVNIKRIGTNARLKMQEVGEKKVFLNLQVIAQKSWSKEEKSLQKLGYIYQRNRD</sequence>
<protein>
    <recommendedName>
        <fullName evidence="1">GTPase Era</fullName>
    </recommendedName>
</protein>
<gene>
    <name evidence="1" type="primary">era</name>
    <name type="ordered locus">Hac_0885</name>
</gene>